<protein>
    <recommendedName>
        <fullName evidence="1">Intermembrane phospholipid transport system binding protein MlaB</fullName>
    </recommendedName>
</protein>
<accession>Q57407</accession>
<accession>O05044</accession>
<comment type="function">
    <text evidence="1">Part of the ABC transporter complex MlaFEDB, which is involved in a phospholipid transport pathway that maintains lipid asymmetry in the outer membrane by retrograde trafficking of phospholipids from the outer membrane to the inner membrane. MlaB plays critical roles in both the assembly and activity of the complex. May act by modulating MlaF structure and stability.</text>
</comment>
<comment type="subunit">
    <text evidence="1">The complex is composed of two ATP-binding proteins (MlaF), two transmembrane proteins (MlaE), two cytoplasmic solute-binding proteins (MlaB) and six periplasmic solute-binding proteins (MlaD).</text>
</comment>
<comment type="subcellular location">
    <subcellularLocation>
        <location evidence="1">Cytoplasm</location>
    </subcellularLocation>
</comment>
<sequence length="105" mass="12105">MLNWDLQKNNDKITLFLFGELSRSTLLPMWQQRGVFLSASTLDKTIVEWNLSDLQHIDSAGFAALCDFLRECQKLNKTVRLVYPPKQLLTLADLFGLSDWIANFI</sequence>
<keyword id="KW-0963">Cytoplasm</keyword>
<keyword id="KW-1185">Reference proteome</keyword>
<keyword id="KW-0813">Transport</keyword>
<feature type="chain" id="PRO_0000078001" description="Intermembrane phospholipid transport system binding protein MlaB">
    <location>
        <begin position="1"/>
        <end position="105"/>
    </location>
</feature>
<feature type="domain" description="STAS" evidence="2">
    <location>
        <begin position="4"/>
        <end position="105"/>
    </location>
</feature>
<organism>
    <name type="scientific">Haemophilus influenzae (strain ATCC 51907 / DSM 11121 / KW20 / Rd)</name>
    <dbReference type="NCBI Taxonomy" id="71421"/>
    <lineage>
        <taxon>Bacteria</taxon>
        <taxon>Pseudomonadati</taxon>
        <taxon>Pseudomonadota</taxon>
        <taxon>Gammaproteobacteria</taxon>
        <taxon>Pasteurellales</taxon>
        <taxon>Pasteurellaceae</taxon>
        <taxon>Haemophilus</taxon>
    </lineage>
</organism>
<dbReference type="EMBL" id="L42023">
    <property type="protein sequence ID" value="AAC22739.1"/>
    <property type="molecule type" value="Genomic_DNA"/>
</dbReference>
<dbReference type="PIR" id="A64166">
    <property type="entry name" value="A64166"/>
</dbReference>
<dbReference type="RefSeq" id="NP_439240.1">
    <property type="nucleotide sequence ID" value="NC_000907.1"/>
</dbReference>
<dbReference type="SMR" id="Q57407"/>
<dbReference type="STRING" id="71421.HI_1083"/>
<dbReference type="EnsemblBacteria" id="AAC22739">
    <property type="protein sequence ID" value="AAC22739"/>
    <property type="gene ID" value="HI_1083"/>
</dbReference>
<dbReference type="KEGG" id="hin:HI_1083"/>
<dbReference type="PATRIC" id="fig|71421.8.peg.1128"/>
<dbReference type="eggNOG" id="COG3113">
    <property type="taxonomic scope" value="Bacteria"/>
</dbReference>
<dbReference type="HOGENOM" id="CLU_115403_13_0_6"/>
<dbReference type="OrthoDB" id="5687860at2"/>
<dbReference type="BioCyc" id="HINF71421:G1GJ1-1118-MONOMER"/>
<dbReference type="Proteomes" id="UP000000579">
    <property type="component" value="Chromosome"/>
</dbReference>
<dbReference type="GO" id="GO:0005737">
    <property type="term" value="C:cytoplasm"/>
    <property type="evidence" value="ECO:0007669"/>
    <property type="project" value="UniProtKB-SubCell"/>
</dbReference>
<dbReference type="GO" id="GO:1990531">
    <property type="term" value="C:phospholipid-translocating ATPase complex"/>
    <property type="evidence" value="ECO:0000318"/>
    <property type="project" value="GO_Central"/>
</dbReference>
<dbReference type="GO" id="GO:0120014">
    <property type="term" value="F:phospholipid transfer activity"/>
    <property type="evidence" value="ECO:0000318"/>
    <property type="project" value="GO_Central"/>
</dbReference>
<dbReference type="GO" id="GO:0006974">
    <property type="term" value="P:DNA damage response"/>
    <property type="evidence" value="ECO:0000318"/>
    <property type="project" value="GO_Central"/>
</dbReference>
<dbReference type="GO" id="GO:0120010">
    <property type="term" value="P:intermembrane phospholipid transfer"/>
    <property type="evidence" value="ECO:0000318"/>
    <property type="project" value="GO_Central"/>
</dbReference>
<dbReference type="CDD" id="cd07043">
    <property type="entry name" value="STAS_anti-anti-sigma_factors"/>
    <property type="match status" value="1"/>
</dbReference>
<dbReference type="Gene3D" id="3.30.750.24">
    <property type="entry name" value="STAS domain"/>
    <property type="match status" value="1"/>
</dbReference>
<dbReference type="InterPro" id="IPR052746">
    <property type="entry name" value="MlaB_ABC_Transporter"/>
</dbReference>
<dbReference type="InterPro" id="IPR002645">
    <property type="entry name" value="STAS_dom"/>
</dbReference>
<dbReference type="InterPro" id="IPR036513">
    <property type="entry name" value="STAS_dom_sf"/>
</dbReference>
<dbReference type="PANTHER" id="PTHR35849">
    <property type="entry name" value="BLR2341 PROTEIN"/>
    <property type="match status" value="1"/>
</dbReference>
<dbReference type="PANTHER" id="PTHR35849:SF1">
    <property type="entry name" value="INTERMEMBRANE PHOSPHOLIPID TRANSPORT SYSTEM BINDING PROTEIN MLAB"/>
    <property type="match status" value="1"/>
</dbReference>
<dbReference type="Pfam" id="PF01740">
    <property type="entry name" value="STAS"/>
    <property type="match status" value="1"/>
</dbReference>
<dbReference type="SUPFAM" id="SSF52091">
    <property type="entry name" value="SpoIIaa-like"/>
    <property type="match status" value="1"/>
</dbReference>
<dbReference type="PROSITE" id="PS50801">
    <property type="entry name" value="STAS"/>
    <property type="match status" value="1"/>
</dbReference>
<name>MLAB_HAEIN</name>
<evidence type="ECO:0000250" key="1">
    <source>
        <dbReference type="UniProtKB" id="P64602"/>
    </source>
</evidence>
<evidence type="ECO:0000255" key="2">
    <source>
        <dbReference type="PROSITE-ProRule" id="PRU00198"/>
    </source>
</evidence>
<gene>
    <name evidence="1" type="primary">mlaB</name>
    <name type="ordered locus">HI_1083</name>
</gene>
<proteinExistence type="inferred from homology"/>
<reference key="1">
    <citation type="journal article" date="1995" name="Science">
        <title>Whole-genome random sequencing and assembly of Haemophilus influenzae Rd.</title>
        <authorList>
            <person name="Fleischmann R.D."/>
            <person name="Adams M.D."/>
            <person name="White O."/>
            <person name="Clayton R.A."/>
            <person name="Kirkness E.F."/>
            <person name="Kerlavage A.R."/>
            <person name="Bult C.J."/>
            <person name="Tomb J.-F."/>
            <person name="Dougherty B.A."/>
            <person name="Merrick J.M."/>
            <person name="McKenney K."/>
            <person name="Sutton G.G."/>
            <person name="FitzHugh W."/>
            <person name="Fields C.A."/>
            <person name="Gocayne J.D."/>
            <person name="Scott J.D."/>
            <person name="Shirley R."/>
            <person name="Liu L.-I."/>
            <person name="Glodek A."/>
            <person name="Kelley J.M."/>
            <person name="Weidman J.F."/>
            <person name="Phillips C.A."/>
            <person name="Spriggs T."/>
            <person name="Hedblom E."/>
            <person name="Cotton M.D."/>
            <person name="Utterback T.R."/>
            <person name="Hanna M.C."/>
            <person name="Nguyen D.T."/>
            <person name="Saudek D.M."/>
            <person name="Brandon R.C."/>
            <person name="Fine L.D."/>
            <person name="Fritchman J.L."/>
            <person name="Fuhrmann J.L."/>
            <person name="Geoghagen N.S.M."/>
            <person name="Gnehm C.L."/>
            <person name="McDonald L.A."/>
            <person name="Small K.V."/>
            <person name="Fraser C.M."/>
            <person name="Smith H.O."/>
            <person name="Venter J.C."/>
        </authorList>
    </citation>
    <scope>NUCLEOTIDE SEQUENCE [LARGE SCALE GENOMIC DNA]</scope>
    <source>
        <strain>ATCC 51907 / DSM 11121 / KW20 / Rd</strain>
    </source>
</reference>